<gene>
    <name type="ordered locus">At1g30920</name>
    <name type="ORF">F17F8.21</name>
</gene>
<evidence type="ECO:0000255" key="1">
    <source>
        <dbReference type="PROSITE-ProRule" id="PRU00080"/>
    </source>
</evidence>
<evidence type="ECO:0000305" key="2"/>
<reference key="1">
    <citation type="journal article" date="2000" name="Nature">
        <title>Sequence and analysis of chromosome 1 of the plant Arabidopsis thaliana.</title>
        <authorList>
            <person name="Theologis A."/>
            <person name="Ecker J.R."/>
            <person name="Palm C.J."/>
            <person name="Federspiel N.A."/>
            <person name="Kaul S."/>
            <person name="White O."/>
            <person name="Alonso J."/>
            <person name="Altafi H."/>
            <person name="Araujo R."/>
            <person name="Bowman C.L."/>
            <person name="Brooks S.Y."/>
            <person name="Buehler E."/>
            <person name="Chan A."/>
            <person name="Chao Q."/>
            <person name="Chen H."/>
            <person name="Cheuk R.F."/>
            <person name="Chin C.W."/>
            <person name="Chung M.K."/>
            <person name="Conn L."/>
            <person name="Conway A.B."/>
            <person name="Conway A.R."/>
            <person name="Creasy T.H."/>
            <person name="Dewar K."/>
            <person name="Dunn P."/>
            <person name="Etgu P."/>
            <person name="Feldblyum T.V."/>
            <person name="Feng J.-D."/>
            <person name="Fong B."/>
            <person name="Fujii C.Y."/>
            <person name="Gill J.E."/>
            <person name="Goldsmith A.D."/>
            <person name="Haas B."/>
            <person name="Hansen N.F."/>
            <person name="Hughes B."/>
            <person name="Huizar L."/>
            <person name="Hunter J.L."/>
            <person name="Jenkins J."/>
            <person name="Johnson-Hopson C."/>
            <person name="Khan S."/>
            <person name="Khaykin E."/>
            <person name="Kim C.J."/>
            <person name="Koo H.L."/>
            <person name="Kremenetskaia I."/>
            <person name="Kurtz D.B."/>
            <person name="Kwan A."/>
            <person name="Lam B."/>
            <person name="Langin-Hooper S."/>
            <person name="Lee A."/>
            <person name="Lee J.M."/>
            <person name="Lenz C.A."/>
            <person name="Li J.H."/>
            <person name="Li Y.-P."/>
            <person name="Lin X."/>
            <person name="Liu S.X."/>
            <person name="Liu Z.A."/>
            <person name="Luros J.S."/>
            <person name="Maiti R."/>
            <person name="Marziali A."/>
            <person name="Militscher J."/>
            <person name="Miranda M."/>
            <person name="Nguyen M."/>
            <person name="Nierman W.C."/>
            <person name="Osborne B.I."/>
            <person name="Pai G."/>
            <person name="Peterson J."/>
            <person name="Pham P.K."/>
            <person name="Rizzo M."/>
            <person name="Rooney T."/>
            <person name="Rowley D."/>
            <person name="Sakano H."/>
            <person name="Salzberg S.L."/>
            <person name="Schwartz J.R."/>
            <person name="Shinn P."/>
            <person name="Southwick A.M."/>
            <person name="Sun H."/>
            <person name="Tallon L.J."/>
            <person name="Tambunga G."/>
            <person name="Toriumi M.J."/>
            <person name="Town C.D."/>
            <person name="Utterback T."/>
            <person name="Van Aken S."/>
            <person name="Vaysberg M."/>
            <person name="Vysotskaia V.S."/>
            <person name="Walker M."/>
            <person name="Wu D."/>
            <person name="Yu G."/>
            <person name="Fraser C.M."/>
            <person name="Venter J.C."/>
            <person name="Davis R.W."/>
        </authorList>
    </citation>
    <scope>NUCLEOTIDE SEQUENCE [LARGE SCALE GENOMIC DNA]</scope>
    <source>
        <strain>cv. Columbia</strain>
    </source>
</reference>
<reference key="2">
    <citation type="journal article" date="2017" name="Plant J.">
        <title>Araport11: a complete reannotation of the Arabidopsis thaliana reference genome.</title>
        <authorList>
            <person name="Cheng C.Y."/>
            <person name="Krishnakumar V."/>
            <person name="Chan A.P."/>
            <person name="Thibaud-Nissen F."/>
            <person name="Schobel S."/>
            <person name="Town C.D."/>
        </authorList>
    </citation>
    <scope>GENOME REANNOTATION</scope>
    <source>
        <strain>cv. Columbia</strain>
    </source>
</reference>
<keyword id="KW-1185">Reference proteome</keyword>
<dbReference type="EMBL" id="AC000107">
    <property type="protein sequence ID" value="AAF98191.1"/>
    <property type="status" value="ALT_SEQ"/>
    <property type="molecule type" value="Genomic_DNA"/>
</dbReference>
<dbReference type="EMBL" id="CP002684">
    <property type="protein sequence ID" value="AEE31293.1"/>
    <property type="molecule type" value="Genomic_DNA"/>
</dbReference>
<dbReference type="PIR" id="H86434">
    <property type="entry name" value="H86434"/>
</dbReference>
<dbReference type="RefSeq" id="NP_174377.1">
    <property type="nucleotide sequence ID" value="NM_102829.2"/>
</dbReference>
<dbReference type="SMR" id="P0C2G2"/>
<dbReference type="BioGRID" id="25211">
    <property type="interactions" value="7"/>
</dbReference>
<dbReference type="FunCoup" id="P0C2G2">
    <property type="interactions" value="28"/>
</dbReference>
<dbReference type="PaxDb" id="3702-AT1G30920.1"/>
<dbReference type="EnsemblPlants" id="AT1G30920.1">
    <property type="protein sequence ID" value="AT1G30920.1"/>
    <property type="gene ID" value="AT1G30920"/>
</dbReference>
<dbReference type="GeneID" id="839976"/>
<dbReference type="Gramene" id="AT1G30920.1">
    <property type="protein sequence ID" value="AT1G30920.1"/>
    <property type="gene ID" value="AT1G30920"/>
</dbReference>
<dbReference type="KEGG" id="ath:AT1G30920"/>
<dbReference type="Araport" id="AT1G30920"/>
<dbReference type="TAIR" id="AT1G30920"/>
<dbReference type="HOGENOM" id="CLU_027176_8_1_1"/>
<dbReference type="InParanoid" id="P0C2G2"/>
<dbReference type="OMA" id="PHYPERE"/>
<dbReference type="PhylomeDB" id="P0C2G2"/>
<dbReference type="PRO" id="PR:P0C2G2"/>
<dbReference type="Proteomes" id="UP000006548">
    <property type="component" value="Chromosome 1"/>
</dbReference>
<dbReference type="ExpressionAtlas" id="P0C2G2">
    <property type="expression patterns" value="baseline and differential"/>
</dbReference>
<dbReference type="CDD" id="cd22157">
    <property type="entry name" value="F-box_AtFBW1-like"/>
    <property type="match status" value="1"/>
</dbReference>
<dbReference type="Gene3D" id="1.20.1280.50">
    <property type="match status" value="1"/>
</dbReference>
<dbReference type="InterPro" id="IPR013187">
    <property type="entry name" value="F-box-assoc_dom_typ3"/>
</dbReference>
<dbReference type="InterPro" id="IPR017451">
    <property type="entry name" value="F-box-assoc_interact_dom"/>
</dbReference>
<dbReference type="InterPro" id="IPR036047">
    <property type="entry name" value="F-box-like_dom_sf"/>
</dbReference>
<dbReference type="InterPro" id="IPR001810">
    <property type="entry name" value="F-box_dom"/>
</dbReference>
<dbReference type="NCBIfam" id="TIGR01640">
    <property type="entry name" value="F_box_assoc_1"/>
    <property type="match status" value="1"/>
</dbReference>
<dbReference type="PANTHER" id="PTHR31111">
    <property type="entry name" value="BNAA05G37150D PROTEIN-RELATED"/>
    <property type="match status" value="1"/>
</dbReference>
<dbReference type="PANTHER" id="PTHR31111:SF130">
    <property type="entry name" value="F-BOX ASSOCIATED UBIQUITINATION EFFECTOR FAMILY PROTEIN"/>
    <property type="match status" value="1"/>
</dbReference>
<dbReference type="Pfam" id="PF00646">
    <property type="entry name" value="F-box"/>
    <property type="match status" value="1"/>
</dbReference>
<dbReference type="Pfam" id="PF08268">
    <property type="entry name" value="FBA_3"/>
    <property type="match status" value="1"/>
</dbReference>
<dbReference type="SMART" id="SM00256">
    <property type="entry name" value="FBOX"/>
    <property type="match status" value="1"/>
</dbReference>
<dbReference type="SUPFAM" id="SSF81383">
    <property type="entry name" value="F-box domain"/>
    <property type="match status" value="1"/>
</dbReference>
<dbReference type="PROSITE" id="PS50181">
    <property type="entry name" value="FBOX"/>
    <property type="match status" value="1"/>
</dbReference>
<name>FB21_ARATH</name>
<sequence>MNSEENTDSIPIDLILDILSRLPSKSIARCRCVSKLWESMIRQSYFTELFLTRSSSRPHLLIAVEQEGEWKFFSLPQPKNYLGKSSLVVAANLHLKFFEDKRPQHGCSYASSLIYFPNMTIRKKGDDHLGVICNPSTGQYGYVILPPLLDFKSVPYGKFLGFDPIDKQFKVLIPIFDFDKHQTDHHILTLGAETVGWRKIQSPLRYLPHSNGTICINGILYYLAKINYAMDKNVLVCFDVRSENFVFLRLNTYCSSTKLVNYKGKLGMINQEYVDDGGFPLKLSVWVLEDVGKEEWSTYVYTLRDDNKVDQVKYNLSVVGVTASGEIVLVKKTQTLKPFYVLYFNPDKNTLLTVEVKGLHRGLYAVHRIYAFVDHVEDLEFNIMKTTYAAKSKFSQEDRF</sequence>
<accession>P0C2G2</accession>
<accession>Q9FYH9</accession>
<feature type="chain" id="PRO_0000274945" description="Putative F-box protein At1g30920">
    <location>
        <begin position="1"/>
        <end position="400"/>
    </location>
</feature>
<feature type="domain" description="F-box" evidence="1">
    <location>
        <begin position="4"/>
        <end position="49"/>
    </location>
</feature>
<comment type="sequence caution" evidence="2">
    <conflict type="erroneous gene model prediction">
        <sequence resource="EMBL-CDS" id="AAF98191"/>
    </conflict>
    <text>The predicted gene has been split into 3 genes: At1g30920, At1g30921 and At1g30925.</text>
</comment>
<protein>
    <recommendedName>
        <fullName>Putative F-box protein At1g30920</fullName>
    </recommendedName>
</protein>
<proteinExistence type="predicted"/>
<organism>
    <name type="scientific">Arabidopsis thaliana</name>
    <name type="common">Mouse-ear cress</name>
    <dbReference type="NCBI Taxonomy" id="3702"/>
    <lineage>
        <taxon>Eukaryota</taxon>
        <taxon>Viridiplantae</taxon>
        <taxon>Streptophyta</taxon>
        <taxon>Embryophyta</taxon>
        <taxon>Tracheophyta</taxon>
        <taxon>Spermatophyta</taxon>
        <taxon>Magnoliopsida</taxon>
        <taxon>eudicotyledons</taxon>
        <taxon>Gunneridae</taxon>
        <taxon>Pentapetalae</taxon>
        <taxon>rosids</taxon>
        <taxon>malvids</taxon>
        <taxon>Brassicales</taxon>
        <taxon>Brassicaceae</taxon>
        <taxon>Camelineae</taxon>
        <taxon>Arabidopsis</taxon>
    </lineage>
</organism>